<keyword id="KW-1132">Decay of host mRNAs by virus</keyword>
<keyword id="KW-0244">Early protein</keyword>
<keyword id="KW-0255">Endonuclease</keyword>
<keyword id="KW-1262">Eukaryotic host gene expression shutoff by virus</keyword>
<keyword id="KW-0269">Exonuclease</keyword>
<keyword id="KW-1035">Host cytoplasm</keyword>
<keyword id="KW-1190">Host gene expression shutoff by virus</keyword>
<keyword id="KW-1192">Host mRNA suppression by virus</keyword>
<keyword id="KW-1048">Host nucleus</keyword>
<keyword id="KW-0945">Host-virus interaction</keyword>
<keyword id="KW-0378">Hydrolase</keyword>
<keyword id="KW-0540">Nuclease</keyword>
<keyword id="KW-1185">Reference proteome</keyword>
<keyword id="KW-0694">RNA-binding</keyword>
<evidence type="ECO:0000255" key="1">
    <source>
        <dbReference type="HAMAP-Rule" id="MF_04009"/>
    </source>
</evidence>
<evidence type="ECO:0000269" key="2">
    <source>
    </source>
</evidence>
<evidence type="ECO:0000269" key="3">
    <source>
    </source>
</evidence>
<evidence type="ECO:0000269" key="4">
    <source>
    </source>
</evidence>
<evidence type="ECO:0000269" key="5">
    <source>
    </source>
</evidence>
<organism>
    <name type="scientific">Human herpesvirus 8 type P (isolate GK18)</name>
    <name type="common">HHV-8</name>
    <name type="synonym">Kaposi's sarcoma-associated herpesvirus</name>
    <dbReference type="NCBI Taxonomy" id="868565"/>
    <lineage>
        <taxon>Viruses</taxon>
        <taxon>Duplodnaviria</taxon>
        <taxon>Heunggongvirae</taxon>
        <taxon>Peploviricota</taxon>
        <taxon>Herviviricetes</taxon>
        <taxon>Herpesvirales</taxon>
        <taxon>Orthoherpesviridae</taxon>
        <taxon>Gammaherpesvirinae</taxon>
        <taxon>Rhadinovirus</taxon>
        <taxon>Rhadinovirus humangamma8</taxon>
        <taxon>Human herpesvirus 8</taxon>
    </lineage>
</organism>
<proteinExistence type="evidence at protein level"/>
<reference key="1">
    <citation type="journal article" date="2006" name="J. Gen. Virol.">
        <title>Kaposi's sarcoma-associated herpesvirus immune modulation: an overview.</title>
        <authorList>
            <person name="Rezaee S.A.R."/>
            <person name="Cunningham C."/>
            <person name="Davison A.J."/>
            <person name="Blackbourn D.J."/>
        </authorList>
    </citation>
    <scope>NUCLEOTIDE SEQUENCE [LARGE SCALE GENOMIC DNA]</scope>
</reference>
<reference key="2">
    <citation type="journal article" date="2004" name="Mol. Cell">
        <title>Lytic KSHV infection inhibits host gene expression by accelerating global mRNA turnover.</title>
        <authorList>
            <person name="Glaunsinger B."/>
            <person name="Ganem D."/>
        </authorList>
    </citation>
    <scope>FUNCTION</scope>
</reference>
<reference key="3">
    <citation type="journal article" date="2009" name="J. Virol.">
        <title>Host shutoff is a conserved phenotype of gammaherpesvirus infection and is orchestrated exclusively from the cytoplasm.</title>
        <authorList>
            <person name="Covarrubias S."/>
            <person name="Richner J.M."/>
            <person name="Clyde K."/>
            <person name="Lee Y.J."/>
            <person name="Glaunsinger B.A."/>
        </authorList>
    </citation>
    <scope>FUNCTION</scope>
    <scope>SUBCELLULAR LOCATION</scope>
</reference>
<reference key="4">
    <citation type="journal article" date="2011" name="PLoS Pathog.">
        <title>Coordinated destruction of cellular messages in translation complexes by the gammaherpesvirus host shutoff factor and the mammalian exonuclease Xrn1.</title>
        <authorList>
            <person name="Covarrubias S."/>
            <person name="Gaglia M.M."/>
            <person name="Kumar G.R."/>
            <person name="Wong W."/>
            <person name="Jackson A.O."/>
            <person name="Glaunsinger B.A."/>
        </authorList>
    </citation>
    <scope>FUNCTION</scope>
    <scope>MUTAGENESIS OF GLU-184; ASP-221; GLU-244 AND LYS-246</scope>
</reference>
<reference key="5">
    <citation type="journal article" date="2023" name="Proc. Natl. Acad. Sci. U.S.A.">
        <title>Inhibition of AIM2 inflammasome activation by SOX/ORF37 promotes lytic replication of Kaposi's sarcoma-associated herpesvirus.</title>
        <authorList>
            <person name="Zhang X."/>
            <person name="Lan Q."/>
            <person name="Zhang M."/>
            <person name="Wang F."/>
            <person name="Shi K."/>
            <person name="Li X."/>
            <person name="Kuang E."/>
        </authorList>
    </citation>
    <scope>FUNCTION</scope>
    <scope>MUTAGENESIS OF TYR-443 AND PHE-444</scope>
    <scope>INTERACTION WITH HOST AIM2</scope>
    <scope>SUBCELLULAR LOCATION</scope>
</reference>
<comment type="function">
    <text evidence="1 2 3 4 5">Plays a role in processing non linear or branched viral DNA intermediates in order to promote the production of mature packaged unit-length linear progeny viral DNA molecules. Exhibits endonuclease and exonuclease activities and accepts both double-stranded and single-stranded DNA as substrate. Exonuclease digestion of DNA is in the 5'-&gt; 3' direction and the products are 5'-monophosphate nucleosides. Additionally, forms a recombinase with the major DNA-binding protein, which displays strand exchange activity. Also acts as a cytoplasmic RNA endonuclease that induces degradation of the majority of the cellular messenger RNAs during early lytic infection. The resulting inhibition of cellular protein synthesis serves to ensure maximal viral gene expression and evasion from host immune response. Internally cleaves host mRNAs which are then degraded by the cellular exonuclease XRN1. Bypasses therefore the regulatory steps of deadenylation and decapping normally required for XRN1 activation. In addition, inhibits host inflammasome activation to promote viral lytic replication by interacting with host AIM2 and disrupting its polymerization (PubMed:37364111).</text>
</comment>
<comment type="subunit">
    <text evidence="1">Forms a complex with the DNA polymerase, the DNA polymerase processivity factor, and the major DNA binding protein.</text>
</comment>
<comment type="subcellular location">
    <subcellularLocation>
        <location evidence="1 3 5">Host nucleus</location>
    </subcellularLocation>
    <subcellularLocation>
        <location evidence="1 3 5">Host cytoplasm</location>
    </subcellularLocation>
</comment>
<comment type="similarity">
    <text evidence="1">Belongs to the herpesviridae alkaline nuclease family.</text>
</comment>
<organismHost>
    <name type="scientific">Homo sapiens</name>
    <name type="common">Human</name>
    <dbReference type="NCBI Taxonomy" id="9606"/>
</organismHost>
<name>AN_HHV8P</name>
<dbReference type="EC" id="3.1.-.-" evidence="1"/>
<dbReference type="EMBL" id="AF148805">
    <property type="protein sequence ID" value="ABD28888.1"/>
    <property type="molecule type" value="Genomic_DNA"/>
</dbReference>
<dbReference type="RefSeq" id="YP_001129390.1">
    <property type="nucleotide sequence ID" value="NC_009333.1"/>
</dbReference>
<dbReference type="SMR" id="Q2HR95"/>
<dbReference type="BioGRID" id="1777015">
    <property type="interactions" value="5"/>
</dbReference>
<dbReference type="DNASU" id="4961512"/>
<dbReference type="KEGG" id="vg:4961483"/>
<dbReference type="Proteomes" id="UP000000942">
    <property type="component" value="Segment"/>
</dbReference>
<dbReference type="GO" id="GO:0030430">
    <property type="term" value="C:host cell cytoplasm"/>
    <property type="evidence" value="ECO:0007669"/>
    <property type="project" value="UniProtKB-SubCell"/>
</dbReference>
<dbReference type="GO" id="GO:0042025">
    <property type="term" value="C:host cell nucleus"/>
    <property type="evidence" value="ECO:0007669"/>
    <property type="project" value="UniProtKB-SubCell"/>
</dbReference>
<dbReference type="GO" id="GO:0003677">
    <property type="term" value="F:DNA binding"/>
    <property type="evidence" value="ECO:0007669"/>
    <property type="project" value="InterPro"/>
</dbReference>
<dbReference type="GO" id="GO:0004519">
    <property type="term" value="F:endonuclease activity"/>
    <property type="evidence" value="ECO:0007669"/>
    <property type="project" value="UniProtKB-KW"/>
</dbReference>
<dbReference type="GO" id="GO:0004527">
    <property type="term" value="F:exonuclease activity"/>
    <property type="evidence" value="ECO:0007669"/>
    <property type="project" value="UniProtKB-KW"/>
</dbReference>
<dbReference type="GO" id="GO:0003723">
    <property type="term" value="F:RNA binding"/>
    <property type="evidence" value="ECO:0007669"/>
    <property type="project" value="UniProtKB-KW"/>
</dbReference>
<dbReference type="GO" id="GO:0039595">
    <property type="term" value="P:symbiont-mediated degradation of host mRNA"/>
    <property type="evidence" value="ECO:0007669"/>
    <property type="project" value="UniProtKB-KW"/>
</dbReference>
<dbReference type="GO" id="GO:0039657">
    <property type="term" value="P:symbiont-mediated suppression of host gene expression"/>
    <property type="evidence" value="ECO:0007669"/>
    <property type="project" value="UniProtKB-KW"/>
</dbReference>
<dbReference type="Gene3D" id="1.20.120.860">
    <property type="entry name" value="Herpesvirus alkaline exonuclease, N-terminal domain"/>
    <property type="match status" value="1"/>
</dbReference>
<dbReference type="HAMAP" id="MF_04009">
    <property type="entry name" value="HSV_AN"/>
    <property type="match status" value="1"/>
</dbReference>
<dbReference type="InterPro" id="IPR001616">
    <property type="entry name" value="Herpes_alk_exo"/>
</dbReference>
<dbReference type="InterPro" id="IPR011335">
    <property type="entry name" value="Restrct_endonuc-II-like"/>
</dbReference>
<dbReference type="InterPro" id="IPR034720">
    <property type="entry name" value="Viral_alk_exo"/>
</dbReference>
<dbReference type="Pfam" id="PF01771">
    <property type="entry name" value="Viral_alk_exo"/>
    <property type="match status" value="1"/>
</dbReference>
<dbReference type="PRINTS" id="PR00924">
    <property type="entry name" value="ALKEXNUCLASE"/>
</dbReference>
<dbReference type="SUPFAM" id="SSF52980">
    <property type="entry name" value="Restriction endonuclease-like"/>
    <property type="match status" value="1"/>
</dbReference>
<feature type="chain" id="PRO_0000423145" description="Shutoff alkaline exonuclease">
    <location>
        <begin position="1"/>
        <end position="486"/>
    </location>
</feature>
<feature type="site" description="Required for function" evidence="1">
    <location>
        <position position="184"/>
    </location>
</feature>
<feature type="site" description="Required for function" evidence="1">
    <location>
        <position position="221"/>
    </location>
</feature>
<feature type="site" description="Required for function" evidence="1">
    <location>
        <position position="244"/>
    </location>
</feature>
<feature type="site" description="Required for function" evidence="1">
    <location>
        <position position="246"/>
    </location>
</feature>
<feature type="mutagenesis site" description="Complete loss of ability to deplete cellular mRNAs." evidence="4">
    <original>E</original>
    <variation>A</variation>
    <location>
        <position position="184"/>
    </location>
</feature>
<feature type="mutagenesis site" description="Complete loss of ability to deplete cellular mRNAs." evidence="4">
    <original>D</original>
    <variation>A</variation>
    <variation>S</variation>
    <location>
        <position position="221"/>
    </location>
</feature>
<feature type="mutagenesis site" description="Complete loss of ability to deplete cellular mRNAs." evidence="4">
    <original>E</original>
    <variation>A</variation>
    <location>
        <position position="244"/>
    </location>
</feature>
<feature type="mutagenesis site" description="Complete loss of ability to deplete cellular mRNAs." evidence="4">
    <original>K</original>
    <variation>I</variation>
    <location>
        <position position="246"/>
    </location>
</feature>
<feature type="mutagenesis site" description="Complete loss of ability to inhibit host AIM2 inflammasome formation without disrupting ORF37 nuclease activity." evidence="5">
    <original>Y</original>
    <variation>A</variation>
    <location>
        <position position="443"/>
    </location>
</feature>
<feature type="mutagenesis site" description="Complete loss of ability to inhibit host AIM2 inflammasome formation without disrupting ORF37 nuclease activity." evidence="5">
    <original>F</original>
    <variation>A</variation>
    <location>
        <position position="444"/>
    </location>
</feature>
<accession>Q2HR95</accession>
<sequence length="486" mass="55076">MEATPTPADLFSEDYLVDTLDGLTVDDQQAVLASLSFSKFLKHAKVRDWCAQAKIQPSMPALRMAYNYFLFSKVGEFIGSEDVCNFFVDRVFGGVRLLDVASVYAACSQMNAHQRHHICCLVERATSSQSLNPVWDALRDGIISSSKFHWAVKQQNTSKKIFSPWPITNNHFVAGPLAFGLRCEEVVKTLLATLLHPDEANCLDYGFMQSPQNGIFGVSLDFAANVKTDTEGRLQFDPNCKVYEIKCRFKYTFAKMECDPIYAAYQRLYEAPGKLALKDFFYSISKPAVEYVGLGKLPSESDYLVAYDQEWEACPRKKRKLTPLHNLIRECILHNSTTESDVYVLTDPQDTRGQISIKARFKANLFVNVRHSYFYQVLLQSSIVEEYIGLDSGIPRLGSPKYYIATGFFRKRGYQDPVNCTIGGDALDPHVEIPTLLIVTPVYFPRGAKHRLLHQAANFWSRSAKDTFPYIKWDFSYLSANVPHSP</sequence>
<gene>
    <name type="primary">ORF37</name>
</gene>
<protein>
    <recommendedName>
        <fullName evidence="1">Shutoff alkaline exonuclease</fullName>
        <shortName evidence="1">SOX</shortName>
        <ecNumber evidence="1">3.1.-.-</ecNumber>
    </recommendedName>
</protein>